<proteinExistence type="inferred from homology"/>
<evidence type="ECO:0000255" key="1">
    <source>
        <dbReference type="HAMAP-Rule" id="MF_00384"/>
    </source>
</evidence>
<reference key="1">
    <citation type="journal article" date="2008" name="J. Bacteriol.">
        <title>The genome sequence of the tomato-pathogenic actinomycete Clavibacter michiganensis subsp. michiganensis NCPPB382 reveals a large island involved in pathogenicity.</title>
        <authorList>
            <person name="Gartemann K.-H."/>
            <person name="Abt B."/>
            <person name="Bekel T."/>
            <person name="Burger A."/>
            <person name="Engemann J."/>
            <person name="Fluegel M."/>
            <person name="Gaigalat L."/>
            <person name="Goesmann A."/>
            <person name="Graefen I."/>
            <person name="Kalinowski J."/>
            <person name="Kaup O."/>
            <person name="Kirchner O."/>
            <person name="Krause L."/>
            <person name="Linke B."/>
            <person name="McHardy A."/>
            <person name="Meyer F."/>
            <person name="Pohle S."/>
            <person name="Rueckert C."/>
            <person name="Schneiker S."/>
            <person name="Zellermann E.-M."/>
            <person name="Puehler A."/>
            <person name="Eichenlaub R."/>
            <person name="Kaiser O."/>
            <person name="Bartels D."/>
        </authorList>
    </citation>
    <scope>NUCLEOTIDE SEQUENCE [LARGE SCALE GENOMIC DNA]</scope>
    <source>
        <strain>NCPPB 382</strain>
    </source>
</reference>
<sequence>MRSALATGRRVQVRVPATSANLGPGFDTLGLALALYDDLTVTVRDAPGATVDVRGVGAGEVPTDETNLVVTAIAHTFAAFDQPMPGLDLVAENRIPHGRGLGSSGAAIVSGIMAAQGLLAGTVEIDADALLRLATEMEGHPDNVAPALFGGLTIAWVDGQGPQHKKLAVHRGVSPLVLVPVATMSTALARSLQPESVPHEDAIFNVSRSALLIAALIQSPELLLAATEDRLHQDYRAAAMPETNELVHLLRERGYAAVVSGAGPSLLVLGSDPGQRLTAAELVAERSTNPWTALMLAVDVKGSTVQVVDEGSAPAA</sequence>
<organism>
    <name type="scientific">Clavibacter michiganensis subsp. michiganensis (strain NCPPB 382)</name>
    <dbReference type="NCBI Taxonomy" id="443906"/>
    <lineage>
        <taxon>Bacteria</taxon>
        <taxon>Bacillati</taxon>
        <taxon>Actinomycetota</taxon>
        <taxon>Actinomycetes</taxon>
        <taxon>Micrococcales</taxon>
        <taxon>Microbacteriaceae</taxon>
        <taxon>Clavibacter</taxon>
    </lineage>
</organism>
<feature type="chain" id="PRO_1000080118" description="Homoserine kinase">
    <location>
        <begin position="1"/>
        <end position="316"/>
    </location>
</feature>
<feature type="binding site" evidence="1">
    <location>
        <begin position="96"/>
        <end position="106"/>
    </location>
    <ligand>
        <name>ATP</name>
        <dbReference type="ChEBI" id="CHEBI:30616"/>
    </ligand>
</feature>
<comment type="function">
    <text evidence="1">Catalyzes the ATP-dependent phosphorylation of L-homoserine to L-homoserine phosphate.</text>
</comment>
<comment type="catalytic activity">
    <reaction evidence="1">
        <text>L-homoserine + ATP = O-phospho-L-homoserine + ADP + H(+)</text>
        <dbReference type="Rhea" id="RHEA:13985"/>
        <dbReference type="ChEBI" id="CHEBI:15378"/>
        <dbReference type="ChEBI" id="CHEBI:30616"/>
        <dbReference type="ChEBI" id="CHEBI:57476"/>
        <dbReference type="ChEBI" id="CHEBI:57590"/>
        <dbReference type="ChEBI" id="CHEBI:456216"/>
        <dbReference type="EC" id="2.7.1.39"/>
    </reaction>
</comment>
<comment type="pathway">
    <text evidence="1">Amino-acid biosynthesis; L-threonine biosynthesis; L-threonine from L-aspartate: step 4/5.</text>
</comment>
<comment type="subcellular location">
    <subcellularLocation>
        <location evidence="1">Cytoplasm</location>
    </subcellularLocation>
</comment>
<comment type="similarity">
    <text evidence="1">Belongs to the GHMP kinase family. Homoserine kinase subfamily.</text>
</comment>
<keyword id="KW-0028">Amino-acid biosynthesis</keyword>
<keyword id="KW-0067">ATP-binding</keyword>
<keyword id="KW-0963">Cytoplasm</keyword>
<keyword id="KW-0418">Kinase</keyword>
<keyword id="KW-0547">Nucleotide-binding</keyword>
<keyword id="KW-0791">Threonine biosynthesis</keyword>
<keyword id="KW-0808">Transferase</keyword>
<dbReference type="EC" id="2.7.1.39" evidence="1"/>
<dbReference type="EMBL" id="AM711867">
    <property type="protein sequence ID" value="CAN01199.1"/>
    <property type="molecule type" value="Genomic_DNA"/>
</dbReference>
<dbReference type="RefSeq" id="WP_012037841.1">
    <property type="nucleotide sequence ID" value="NC_009480.1"/>
</dbReference>
<dbReference type="SMR" id="A5CQ46"/>
<dbReference type="GeneID" id="92947125"/>
<dbReference type="KEGG" id="cmi:CMM_1155"/>
<dbReference type="eggNOG" id="COG0083">
    <property type="taxonomic scope" value="Bacteria"/>
</dbReference>
<dbReference type="HOGENOM" id="CLU_041243_0_1_11"/>
<dbReference type="OrthoDB" id="9769912at2"/>
<dbReference type="UniPathway" id="UPA00050">
    <property type="reaction ID" value="UER00064"/>
</dbReference>
<dbReference type="Proteomes" id="UP000001564">
    <property type="component" value="Chromosome"/>
</dbReference>
<dbReference type="GO" id="GO:0005737">
    <property type="term" value="C:cytoplasm"/>
    <property type="evidence" value="ECO:0007669"/>
    <property type="project" value="UniProtKB-SubCell"/>
</dbReference>
<dbReference type="GO" id="GO:0005524">
    <property type="term" value="F:ATP binding"/>
    <property type="evidence" value="ECO:0007669"/>
    <property type="project" value="UniProtKB-UniRule"/>
</dbReference>
<dbReference type="GO" id="GO:0004413">
    <property type="term" value="F:homoserine kinase activity"/>
    <property type="evidence" value="ECO:0007669"/>
    <property type="project" value="UniProtKB-UniRule"/>
</dbReference>
<dbReference type="GO" id="GO:0009088">
    <property type="term" value="P:threonine biosynthetic process"/>
    <property type="evidence" value="ECO:0007669"/>
    <property type="project" value="UniProtKB-UniRule"/>
</dbReference>
<dbReference type="Gene3D" id="3.30.230.10">
    <property type="match status" value="1"/>
</dbReference>
<dbReference type="Gene3D" id="3.30.70.890">
    <property type="entry name" value="GHMP kinase, C-terminal domain"/>
    <property type="match status" value="1"/>
</dbReference>
<dbReference type="HAMAP" id="MF_00384">
    <property type="entry name" value="Homoser_kinase"/>
    <property type="match status" value="1"/>
</dbReference>
<dbReference type="InterPro" id="IPR013750">
    <property type="entry name" value="GHMP_kinase_C_dom"/>
</dbReference>
<dbReference type="InterPro" id="IPR036554">
    <property type="entry name" value="GHMP_kinase_C_sf"/>
</dbReference>
<dbReference type="InterPro" id="IPR006204">
    <property type="entry name" value="GHMP_kinase_N_dom"/>
</dbReference>
<dbReference type="InterPro" id="IPR006203">
    <property type="entry name" value="GHMP_knse_ATP-bd_CS"/>
</dbReference>
<dbReference type="InterPro" id="IPR000870">
    <property type="entry name" value="Homoserine_kinase"/>
</dbReference>
<dbReference type="InterPro" id="IPR020568">
    <property type="entry name" value="Ribosomal_Su5_D2-typ_SF"/>
</dbReference>
<dbReference type="InterPro" id="IPR014721">
    <property type="entry name" value="Ribsml_uS5_D2-typ_fold_subgr"/>
</dbReference>
<dbReference type="NCBIfam" id="TIGR00191">
    <property type="entry name" value="thrB"/>
    <property type="match status" value="1"/>
</dbReference>
<dbReference type="PANTHER" id="PTHR20861:SF1">
    <property type="entry name" value="HOMOSERINE KINASE"/>
    <property type="match status" value="1"/>
</dbReference>
<dbReference type="PANTHER" id="PTHR20861">
    <property type="entry name" value="HOMOSERINE/4-DIPHOSPHOCYTIDYL-2-C-METHYL-D-ERYTHRITOL KINASE"/>
    <property type="match status" value="1"/>
</dbReference>
<dbReference type="Pfam" id="PF08544">
    <property type="entry name" value="GHMP_kinases_C"/>
    <property type="match status" value="1"/>
</dbReference>
<dbReference type="Pfam" id="PF00288">
    <property type="entry name" value="GHMP_kinases_N"/>
    <property type="match status" value="1"/>
</dbReference>
<dbReference type="PIRSF" id="PIRSF000676">
    <property type="entry name" value="Homoser_kin"/>
    <property type="match status" value="1"/>
</dbReference>
<dbReference type="PRINTS" id="PR00958">
    <property type="entry name" value="HOMSERKINASE"/>
</dbReference>
<dbReference type="SUPFAM" id="SSF55060">
    <property type="entry name" value="GHMP Kinase, C-terminal domain"/>
    <property type="match status" value="1"/>
</dbReference>
<dbReference type="SUPFAM" id="SSF54211">
    <property type="entry name" value="Ribosomal protein S5 domain 2-like"/>
    <property type="match status" value="1"/>
</dbReference>
<dbReference type="PROSITE" id="PS00627">
    <property type="entry name" value="GHMP_KINASES_ATP"/>
    <property type="match status" value="1"/>
</dbReference>
<name>KHSE_CLAM3</name>
<protein>
    <recommendedName>
        <fullName evidence="1">Homoserine kinase</fullName>
        <shortName evidence="1">HK</shortName>
        <shortName evidence="1">HSK</shortName>
        <ecNumber evidence="1">2.7.1.39</ecNumber>
    </recommendedName>
</protein>
<accession>A5CQ46</accession>
<gene>
    <name evidence="1" type="primary">thrB</name>
    <name type="ordered locus">CMM_1155</name>
</gene>